<protein>
    <recommendedName>
        <fullName evidence="2">Large ribosomal subunit protein bL12</fullName>
    </recommendedName>
    <alternativeName>
        <fullName evidence="3">50S ribosomal protein L7/L12</fullName>
    </alternativeName>
</protein>
<reference key="1">
    <citation type="journal article" date="2004" name="Nat. Genet.">
        <title>Comparison of genome degradation in Paratyphi A and Typhi, human-restricted serovars of Salmonella enterica that cause typhoid.</title>
        <authorList>
            <person name="McClelland M."/>
            <person name="Sanderson K.E."/>
            <person name="Clifton S.W."/>
            <person name="Latreille P."/>
            <person name="Porwollik S."/>
            <person name="Sabo A."/>
            <person name="Meyer R."/>
            <person name="Bieri T."/>
            <person name="Ozersky P."/>
            <person name="McLellan M."/>
            <person name="Harkins C.R."/>
            <person name="Wang C."/>
            <person name="Nguyen C."/>
            <person name="Berghoff A."/>
            <person name="Elliott G."/>
            <person name="Kohlberg S."/>
            <person name="Strong C."/>
            <person name="Du F."/>
            <person name="Carter J."/>
            <person name="Kremizki C."/>
            <person name="Layman D."/>
            <person name="Leonard S."/>
            <person name="Sun H."/>
            <person name="Fulton L."/>
            <person name="Nash W."/>
            <person name="Miner T."/>
            <person name="Minx P."/>
            <person name="Delehaunty K."/>
            <person name="Fronick C."/>
            <person name="Magrini V."/>
            <person name="Nhan M."/>
            <person name="Warren W."/>
            <person name="Florea L."/>
            <person name="Spieth J."/>
            <person name="Wilson R.K."/>
        </authorList>
    </citation>
    <scope>NUCLEOTIDE SEQUENCE [LARGE SCALE GENOMIC DNA]</scope>
    <source>
        <strain>ATCC 9150 / SARB42</strain>
    </source>
</reference>
<name>RL7_SALPA</name>
<dbReference type="EMBL" id="CP000026">
    <property type="protein sequence ID" value="AAV79742.1"/>
    <property type="molecule type" value="Genomic_DNA"/>
</dbReference>
<dbReference type="RefSeq" id="WP_000028882.1">
    <property type="nucleotide sequence ID" value="NC_006511.1"/>
</dbReference>
<dbReference type="SMR" id="Q5PK94"/>
<dbReference type="GeneID" id="89551069"/>
<dbReference type="KEGG" id="spt:SPA3990"/>
<dbReference type="HOGENOM" id="CLU_086499_3_2_6"/>
<dbReference type="Proteomes" id="UP000008185">
    <property type="component" value="Chromosome"/>
</dbReference>
<dbReference type="GO" id="GO:0022625">
    <property type="term" value="C:cytosolic large ribosomal subunit"/>
    <property type="evidence" value="ECO:0007669"/>
    <property type="project" value="TreeGrafter"/>
</dbReference>
<dbReference type="GO" id="GO:0003729">
    <property type="term" value="F:mRNA binding"/>
    <property type="evidence" value="ECO:0007669"/>
    <property type="project" value="TreeGrafter"/>
</dbReference>
<dbReference type="GO" id="GO:0003735">
    <property type="term" value="F:structural constituent of ribosome"/>
    <property type="evidence" value="ECO:0007669"/>
    <property type="project" value="InterPro"/>
</dbReference>
<dbReference type="GO" id="GO:0006412">
    <property type="term" value="P:translation"/>
    <property type="evidence" value="ECO:0007669"/>
    <property type="project" value="UniProtKB-UniRule"/>
</dbReference>
<dbReference type="CDD" id="cd00387">
    <property type="entry name" value="Ribosomal_L7_L12"/>
    <property type="match status" value="1"/>
</dbReference>
<dbReference type="FunFam" id="1.20.5.710:FF:000001">
    <property type="entry name" value="50S ribosomal protein L7/L12"/>
    <property type="match status" value="1"/>
</dbReference>
<dbReference type="FunFam" id="3.30.1390.10:FF:000001">
    <property type="entry name" value="50S ribosomal protein L7/L12"/>
    <property type="match status" value="1"/>
</dbReference>
<dbReference type="Gene3D" id="3.30.1390.10">
    <property type="match status" value="1"/>
</dbReference>
<dbReference type="Gene3D" id="1.20.5.710">
    <property type="entry name" value="Single helix bin"/>
    <property type="match status" value="1"/>
</dbReference>
<dbReference type="HAMAP" id="MF_00368">
    <property type="entry name" value="Ribosomal_bL12"/>
    <property type="match status" value="1"/>
</dbReference>
<dbReference type="InterPro" id="IPR000206">
    <property type="entry name" value="Ribosomal_bL12"/>
</dbReference>
<dbReference type="InterPro" id="IPR013823">
    <property type="entry name" value="Ribosomal_bL12_C"/>
</dbReference>
<dbReference type="InterPro" id="IPR014719">
    <property type="entry name" value="Ribosomal_bL12_C/ClpS-like"/>
</dbReference>
<dbReference type="InterPro" id="IPR008932">
    <property type="entry name" value="Ribosomal_bL12_oligo"/>
</dbReference>
<dbReference type="InterPro" id="IPR036235">
    <property type="entry name" value="Ribosomal_bL12_oligo_N_sf"/>
</dbReference>
<dbReference type="NCBIfam" id="TIGR00855">
    <property type="entry name" value="L12"/>
    <property type="match status" value="1"/>
</dbReference>
<dbReference type="PANTHER" id="PTHR45987">
    <property type="entry name" value="39S RIBOSOMAL PROTEIN L12"/>
    <property type="match status" value="1"/>
</dbReference>
<dbReference type="PANTHER" id="PTHR45987:SF4">
    <property type="entry name" value="LARGE RIBOSOMAL SUBUNIT PROTEIN BL12M"/>
    <property type="match status" value="1"/>
</dbReference>
<dbReference type="Pfam" id="PF00542">
    <property type="entry name" value="Ribosomal_L12"/>
    <property type="match status" value="1"/>
</dbReference>
<dbReference type="Pfam" id="PF16320">
    <property type="entry name" value="Ribosomal_L12_N"/>
    <property type="match status" value="1"/>
</dbReference>
<dbReference type="SUPFAM" id="SSF54736">
    <property type="entry name" value="ClpS-like"/>
    <property type="match status" value="1"/>
</dbReference>
<dbReference type="SUPFAM" id="SSF48300">
    <property type="entry name" value="Ribosomal protein L7/12, oligomerisation (N-terminal) domain"/>
    <property type="match status" value="1"/>
</dbReference>
<accession>Q5PK94</accession>
<proteinExistence type="inferred from homology"/>
<evidence type="ECO:0000250" key="1"/>
<evidence type="ECO:0000255" key="2">
    <source>
        <dbReference type="HAMAP-Rule" id="MF_00368"/>
    </source>
</evidence>
<evidence type="ECO:0000305" key="3"/>
<sequence length="121" mass="12299">MSITKDQIIEAVSAMSVMDVVELISAMEEKFGVSAAAAVAVAAGPAEAAEEKTEFDVILKAAGANKVAVIKAVRGATGLGLKEAKDLVESAPAALKEGVSKDDAEALKKSLEEAGAEVEVK</sequence>
<keyword id="KW-0007">Acetylation</keyword>
<keyword id="KW-0687">Ribonucleoprotein</keyword>
<keyword id="KW-0689">Ribosomal protein</keyword>
<organism>
    <name type="scientific">Salmonella paratyphi A (strain ATCC 9150 / SARB42)</name>
    <dbReference type="NCBI Taxonomy" id="295319"/>
    <lineage>
        <taxon>Bacteria</taxon>
        <taxon>Pseudomonadati</taxon>
        <taxon>Pseudomonadota</taxon>
        <taxon>Gammaproteobacteria</taxon>
        <taxon>Enterobacterales</taxon>
        <taxon>Enterobacteriaceae</taxon>
        <taxon>Salmonella</taxon>
    </lineage>
</organism>
<feature type="initiator methionine" description="Removed" evidence="1">
    <location>
        <position position="1"/>
    </location>
</feature>
<feature type="chain" id="PRO_0000243491" description="Large ribosomal subunit protein bL12">
    <location>
        <begin position="2"/>
        <end position="121"/>
    </location>
</feature>
<feature type="modified residue" description="N-acetylserine; in form L7" evidence="1">
    <location>
        <position position="2"/>
    </location>
</feature>
<gene>
    <name evidence="2" type="primary">rplL</name>
    <name type="ordered locus">SPA3990</name>
</gene>
<comment type="function">
    <text evidence="2">Forms part of the ribosomal stalk which helps the ribosome interact with GTP-bound translation factors. Is thus essential for accurate translation.</text>
</comment>
<comment type="subunit">
    <text evidence="2">Homodimer. Part of the ribosomal stalk of the 50S ribosomal subunit. Forms a multimeric L10(L12)X complex, where L10 forms an elongated spine to which 2 to 4 L12 dimers bind in a sequential fashion. Binds GTP-bound translation factors.</text>
</comment>
<comment type="PTM">
    <text evidence="1">Acetylation of Ser-2 converts L12 to L7.</text>
</comment>
<comment type="similarity">
    <text evidence="2">Belongs to the bacterial ribosomal protein bL12 family.</text>
</comment>